<name>SC5A4_PIG</name>
<accession>P31636</accession>
<dbReference type="EMBL" id="L02900">
    <property type="protein sequence ID" value="AAC37325.1"/>
    <property type="molecule type" value="mRNA"/>
</dbReference>
<dbReference type="PIR" id="A44432">
    <property type="entry name" value="A44432"/>
</dbReference>
<dbReference type="RefSeq" id="NP_999347.1">
    <property type="nucleotide sequence ID" value="NM_214182.1"/>
</dbReference>
<dbReference type="SMR" id="P31636"/>
<dbReference type="FunCoup" id="P31636">
    <property type="interactions" value="88"/>
</dbReference>
<dbReference type="STRING" id="9823.ENSSSCP00000010710"/>
<dbReference type="TCDB" id="2.A.21.3.4">
    <property type="family name" value="the solute:sodium symporter (sss) family"/>
</dbReference>
<dbReference type="GlyCosmos" id="P31636">
    <property type="glycosylation" value="1 site, No reported glycans"/>
</dbReference>
<dbReference type="GlyGen" id="P31636">
    <property type="glycosylation" value="1 site"/>
</dbReference>
<dbReference type="PaxDb" id="9823-ENSSSCP00000010710"/>
<dbReference type="PeptideAtlas" id="P31636"/>
<dbReference type="Ensembl" id="ENSSSCT00055022062.1">
    <property type="protein sequence ID" value="ENSSSCP00055017465.1"/>
    <property type="gene ID" value="ENSSSCG00055011006.1"/>
</dbReference>
<dbReference type="Ensembl" id="ENSSSCT00090035201">
    <property type="protein sequence ID" value="ENSSSCP00090021953"/>
    <property type="gene ID" value="ENSSSCG00090019854"/>
</dbReference>
<dbReference type="Ensembl" id="ENSSSCT00110066836">
    <property type="protein sequence ID" value="ENSSSCP00110047090"/>
    <property type="gene ID" value="ENSSSCG00110035145"/>
</dbReference>
<dbReference type="GeneID" id="397376"/>
<dbReference type="KEGG" id="ssc:397376"/>
<dbReference type="CTD" id="6527"/>
<dbReference type="eggNOG" id="KOG2349">
    <property type="taxonomic scope" value="Eukaryota"/>
</dbReference>
<dbReference type="InParanoid" id="P31636"/>
<dbReference type="OrthoDB" id="6132759at2759"/>
<dbReference type="Reactome" id="R-SSC-189200">
    <property type="pathway name" value="Cellular hexose transport"/>
</dbReference>
<dbReference type="PRO" id="PR:P31636"/>
<dbReference type="Proteomes" id="UP000008227">
    <property type="component" value="Unplaced"/>
</dbReference>
<dbReference type="Proteomes" id="UP000314985">
    <property type="component" value="Unplaced"/>
</dbReference>
<dbReference type="Proteomes" id="UP000694570">
    <property type="component" value="Unplaced"/>
</dbReference>
<dbReference type="Proteomes" id="UP000694571">
    <property type="component" value="Unplaced"/>
</dbReference>
<dbReference type="Proteomes" id="UP000694720">
    <property type="component" value="Unplaced"/>
</dbReference>
<dbReference type="Proteomes" id="UP000694722">
    <property type="component" value="Unplaced"/>
</dbReference>
<dbReference type="Proteomes" id="UP000694723">
    <property type="component" value="Unplaced"/>
</dbReference>
<dbReference type="Proteomes" id="UP000694724">
    <property type="component" value="Unplaced"/>
</dbReference>
<dbReference type="Proteomes" id="UP000694725">
    <property type="component" value="Unplaced"/>
</dbReference>
<dbReference type="Proteomes" id="UP000694726">
    <property type="component" value="Unplaced"/>
</dbReference>
<dbReference type="Proteomes" id="UP000694727">
    <property type="component" value="Unplaced"/>
</dbReference>
<dbReference type="Proteomes" id="UP000694728">
    <property type="component" value="Unplaced"/>
</dbReference>
<dbReference type="GO" id="GO:0005886">
    <property type="term" value="C:plasma membrane"/>
    <property type="evidence" value="ECO:0000318"/>
    <property type="project" value="GO_Central"/>
</dbReference>
<dbReference type="GO" id="GO:0005412">
    <property type="term" value="F:D-glucose:sodium symporter activity"/>
    <property type="evidence" value="ECO:0000314"/>
    <property type="project" value="UniProtKB"/>
</dbReference>
<dbReference type="GO" id="GO:0005362">
    <property type="term" value="F:low-affinity D-glucose:sodium symporter activity"/>
    <property type="evidence" value="ECO:0000314"/>
    <property type="project" value="UniProtKB"/>
</dbReference>
<dbReference type="GO" id="GO:1904659">
    <property type="term" value="P:D-glucose transmembrane transport"/>
    <property type="evidence" value="ECO:0000314"/>
    <property type="project" value="UniProtKB"/>
</dbReference>
<dbReference type="GO" id="GO:0006814">
    <property type="term" value="P:sodium ion transport"/>
    <property type="evidence" value="ECO:0000318"/>
    <property type="project" value="GO_Central"/>
</dbReference>
<dbReference type="FunFam" id="1.20.1730.10:FF:000005">
    <property type="entry name" value="sodium/glucose cotransporter 1 isoform X1"/>
    <property type="match status" value="1"/>
</dbReference>
<dbReference type="Gene3D" id="1.20.1730.10">
    <property type="entry name" value="Sodium/glucose cotransporter"/>
    <property type="match status" value="1"/>
</dbReference>
<dbReference type="InterPro" id="IPR038377">
    <property type="entry name" value="Na/Glc_symporter_sf"/>
</dbReference>
<dbReference type="InterPro" id="IPR001734">
    <property type="entry name" value="Na/solute_symporter"/>
</dbReference>
<dbReference type="InterPro" id="IPR018212">
    <property type="entry name" value="Na/solute_symporter_CS"/>
</dbReference>
<dbReference type="NCBIfam" id="TIGR00813">
    <property type="entry name" value="sss"/>
    <property type="match status" value="1"/>
</dbReference>
<dbReference type="PANTHER" id="PTHR11819:SF112">
    <property type="entry name" value="GLUCOSE SENSOR PROTEIN SLC5A4-RELATED"/>
    <property type="match status" value="1"/>
</dbReference>
<dbReference type="PANTHER" id="PTHR11819">
    <property type="entry name" value="SOLUTE CARRIER FAMILY 5"/>
    <property type="match status" value="1"/>
</dbReference>
<dbReference type="Pfam" id="PF00474">
    <property type="entry name" value="SSF"/>
    <property type="match status" value="1"/>
</dbReference>
<dbReference type="PROSITE" id="PS00456">
    <property type="entry name" value="NA_SOLUT_SYMP_1"/>
    <property type="match status" value="1"/>
</dbReference>
<dbReference type="PROSITE" id="PS00457">
    <property type="entry name" value="NA_SOLUT_SYMP_2"/>
    <property type="match status" value="1"/>
</dbReference>
<dbReference type="PROSITE" id="PS50283">
    <property type="entry name" value="NA_SOLUT_SYMP_3"/>
    <property type="match status" value="1"/>
</dbReference>
<evidence type="ECO:0000250" key="1">
    <source>
        <dbReference type="UniProtKB" id="Q9NY91"/>
    </source>
</evidence>
<evidence type="ECO:0000255" key="2"/>
<evidence type="ECO:0000269" key="3">
    <source>
    </source>
</evidence>
<evidence type="ECO:0000269" key="4">
    <source>
    </source>
</evidence>
<evidence type="ECO:0000269" key="5">
    <source>
    </source>
</evidence>
<evidence type="ECO:0000303" key="6">
    <source>
    </source>
</evidence>
<evidence type="ECO:0000305" key="7"/>
<evidence type="ECO:0000305" key="8">
    <source>
    </source>
</evidence>
<evidence type="ECO:0000305" key="9">
    <source>
    </source>
</evidence>
<gene>
    <name evidence="1" type="primary">SLC5A4</name>
    <name evidence="6" type="synonym">SAAT1</name>
    <name type="synonym">SGLT3</name>
</gene>
<keyword id="KW-1003">Cell membrane</keyword>
<keyword id="KW-0325">Glycoprotein</keyword>
<keyword id="KW-0406">Ion transport</keyword>
<keyword id="KW-0472">Membrane</keyword>
<keyword id="KW-1185">Reference proteome</keyword>
<keyword id="KW-0915">Sodium</keyword>
<keyword id="KW-0739">Sodium transport</keyword>
<keyword id="KW-0762">Sugar transport</keyword>
<keyword id="KW-0769">Symport</keyword>
<keyword id="KW-0812">Transmembrane</keyword>
<keyword id="KW-1133">Transmembrane helix</keyword>
<keyword id="KW-0813">Transport</keyword>
<reference key="1">
    <citation type="journal article" date="1993" name="J. Biol. Chem.">
        <title>Cloning and expression of a mammalian Na+/amino acid cotransporter with sequence similarity to Na+/glucose cotransporters.</title>
        <authorList>
            <person name="Kong C.-T."/>
            <person name="Yet S.-F."/>
            <person name="Lever J.E."/>
        </authorList>
    </citation>
    <scope>NUCLEOTIDE SEQUENCE [MRNA]</scope>
    <scope>TISSUE SPECIFICITY</scope>
    <source>
        <tissue>Kidney</tissue>
    </source>
</reference>
<reference key="2">
    <citation type="journal article" date="1994" name="J. Biol. Chem.">
        <title>SAAT1 is a low affinity Na+/glucose cotransporter and not an amino acid transporter. A reinterpretation.</title>
        <authorList>
            <person name="McKenzie B."/>
            <person name="Panayotova-Heiermann M."/>
            <person name="Loo D.D.F."/>
            <person name="Lever J.E."/>
            <person name="Wright E.M."/>
        </authorList>
    </citation>
    <scope>FUNCTION</scope>
    <scope>TRANSPORTER ACTIVITY</scope>
    <scope>BIOPHYSICOCHEMICAL PROPERTIES</scope>
    <scope>ACTIVITY REGULATION</scope>
</reference>
<reference key="3">
    <citation type="journal article" date="2003" name="Proc. Natl. Acad. Sci. U.S.A.">
        <title>A glucose sensor hiding in a family of transporters.</title>
        <authorList>
            <person name="Diez-Sampedro A."/>
            <person name="Hirayama B.A."/>
            <person name="Osswald C."/>
            <person name="Gorboulev V."/>
            <person name="Baumgarten K."/>
            <person name="Volk C."/>
            <person name="Wright E.M."/>
            <person name="Koepsell H."/>
        </authorList>
    </citation>
    <scope>FUNCTION</scope>
    <scope>TRANSPORTER ACTIVITY</scope>
    <source>
        <tissue>Small intestine</tissue>
    </source>
</reference>
<organism>
    <name type="scientific">Sus scrofa</name>
    <name type="common">Pig</name>
    <dbReference type="NCBI Taxonomy" id="9823"/>
    <lineage>
        <taxon>Eukaryota</taxon>
        <taxon>Metazoa</taxon>
        <taxon>Chordata</taxon>
        <taxon>Craniata</taxon>
        <taxon>Vertebrata</taxon>
        <taxon>Euteleostomi</taxon>
        <taxon>Mammalia</taxon>
        <taxon>Eutheria</taxon>
        <taxon>Laurasiatheria</taxon>
        <taxon>Artiodactyla</taxon>
        <taxon>Suina</taxon>
        <taxon>Suidae</taxon>
        <taxon>Sus</taxon>
    </lineage>
</organism>
<feature type="chain" id="PRO_0000105378" description="Solute carrier family 5 member 4">
    <location>
        <begin position="1"/>
        <end position="660"/>
    </location>
</feature>
<feature type="topological domain" description="Cytoplasmic" evidence="2">
    <location>
        <begin position="1"/>
        <end position="28"/>
    </location>
</feature>
<feature type="transmembrane region" description="Helical" evidence="2">
    <location>
        <begin position="29"/>
        <end position="47"/>
    </location>
</feature>
<feature type="topological domain" description="Extracellular" evidence="2">
    <location>
        <begin position="48"/>
        <end position="64"/>
    </location>
</feature>
<feature type="transmembrane region" description="Helical" evidence="2">
    <location>
        <begin position="65"/>
        <end position="85"/>
    </location>
</feature>
<feature type="topological domain" description="Cytoplasmic" evidence="2">
    <location>
        <begin position="86"/>
        <end position="105"/>
    </location>
</feature>
<feature type="transmembrane region" description="Helical" evidence="2">
    <location>
        <begin position="106"/>
        <end position="126"/>
    </location>
</feature>
<feature type="topological domain" description="Extracellular" evidence="2">
    <location>
        <begin position="127"/>
        <end position="171"/>
    </location>
</feature>
<feature type="transmembrane region" description="Helical" evidence="2">
    <location>
        <begin position="172"/>
        <end position="191"/>
    </location>
</feature>
<feature type="topological domain" description="Cytoplasmic" evidence="2">
    <location>
        <begin position="192"/>
        <end position="208"/>
    </location>
</feature>
<feature type="transmembrane region" description="Helical" evidence="2">
    <location>
        <begin position="209"/>
        <end position="229"/>
    </location>
</feature>
<feature type="topological domain" description="Extracellular" evidence="2">
    <location>
        <begin position="230"/>
        <end position="270"/>
    </location>
</feature>
<feature type="transmembrane region" description="Helical" evidence="2">
    <location>
        <begin position="271"/>
        <end position="291"/>
    </location>
</feature>
<feature type="topological domain" description="Cytoplasmic" evidence="2">
    <location>
        <begin position="292"/>
        <end position="314"/>
    </location>
</feature>
<feature type="transmembrane region" description="Helical" evidence="2">
    <location>
        <begin position="315"/>
        <end position="334"/>
    </location>
</feature>
<feature type="topological domain" description="Extracellular" evidence="2">
    <location>
        <begin position="335"/>
        <end position="423"/>
    </location>
</feature>
<feature type="transmembrane region" description="Helical" evidence="2">
    <location>
        <begin position="424"/>
        <end position="443"/>
    </location>
</feature>
<feature type="topological domain" description="Cytoplasmic" evidence="2">
    <location>
        <begin position="444"/>
        <end position="455"/>
    </location>
</feature>
<feature type="transmembrane region" description="Helical" evidence="2">
    <location>
        <begin position="456"/>
        <end position="476"/>
    </location>
</feature>
<feature type="topological domain" description="Extracellular" evidence="2">
    <location>
        <begin position="477"/>
        <end position="526"/>
    </location>
</feature>
<feature type="transmembrane region" description="Helical" evidence="2">
    <location>
        <begin position="527"/>
        <end position="547"/>
    </location>
</feature>
<feature type="topological domain" description="Cytoplasmic" evidence="2">
    <location>
        <begin position="548"/>
        <end position="638"/>
    </location>
</feature>
<feature type="transmembrane region" description="Helical" evidence="2">
    <location>
        <begin position="639"/>
        <end position="659"/>
    </location>
</feature>
<feature type="glycosylation site" description="N-linked (GlcNAc...) asparagine" evidence="2">
    <location>
        <position position="248"/>
    </location>
</feature>
<proteinExistence type="evidence at protein level"/>
<sequence>MASTLSPSTVTKTPGPPEISERIQNAADISVIVIYFVVVMAVGLWAMLRTNRGTVGGFFLAGRDVTWWPMGASLFASNIGSGHFVGLAGTGAASGIAIAAFEWNALLLLLVLGWFFVPIYIKAGVMTMPEYLRKRFGGKRLQIYLSILSLFICVALRISSDIFSGAIFIKLALGLDLYLAIFSLLAITAIYTITGGLASVIYTDTLQTIIMLIGSFILMGFAFVEVGGYESFTEKYMNAIPTIVEGDNLTISPKCYTPQGDSFHIFRDAVTGDIPWPGMIFGMTVVAAWYWCTDQVIVQRCLSGKDMSHVKAACIMCGYLKLLPMFLMVMPGMISRILYTEKVACVVPSECVKHCGTEVGCSNYAYPLLVMELMPSGLRGLMLSVMLASLMSSLTSIFNSASTLFTMDLYTKIRKQASEKELLIAGRLFIILLIVISIVWVPLVQVAQNGQLFHYIESISSYLGPPIAAVFLLAIFCKRVNEQGAFWGLIIGFVMGLIRMIAEFVYGTGSCLAASNCPQIICGVHYLYFALILFFVSILVVLAISLLTKPIPDVHLYRLCWALRNSTEERIDLDAEEKRHEEAHDGVDEDNPEETRGCLRKAYDLFCGLQRKGPKLSKEEEEAQKRKLTDTSEKPLWKTIVNINAILLLAVAVFVHGYFA</sequence>
<comment type="function">
    <text evidence="3 4">Low-affinity sodium/D-glucose symporter with a great selectivity for sugars (D-glucose &gt;&gt; D-galactose) (PubMed:13130073, PubMed:8077195). Na(+) and D-glucose transport are tightly coupled at neutral pH, but at acidic pH, ion transport is uncoupled from sugar transport (PubMed:13130073, PubMed:8077195).</text>
</comment>
<comment type="catalytic activity">
    <reaction evidence="3 4">
        <text>D-glucose(out) + 2 Na(+)(out) = D-glucose(in) + 2 Na(+)(in)</text>
        <dbReference type="Rhea" id="RHEA:70495"/>
        <dbReference type="ChEBI" id="CHEBI:4167"/>
        <dbReference type="ChEBI" id="CHEBI:29101"/>
    </reaction>
</comment>
<comment type="activity regulation">
    <text evidence="4">Inhibited by phlorizin.</text>
</comment>
<comment type="biophysicochemical properties">
    <kinetics>
        <KM evidence="4">2 mM for methyl alpha-D-glucopyranoside</KM>
    </kinetics>
</comment>
<comment type="subcellular location">
    <subcellularLocation>
        <location evidence="8 9">Cell membrane</location>
        <topology evidence="2">Multi-pass membrane protein</topology>
    </subcellularLocation>
</comment>
<comment type="tissue specificity">
    <text evidence="5">Kidney, intestine, liver, skeletal muscle and spleen.</text>
</comment>
<comment type="similarity">
    <text evidence="7">Belongs to the sodium:solute symporter (SSF) (TC 2.A.21) family.</text>
</comment>
<comment type="caution">
    <text evidence="9">Was originally thought to be a sodium/neutral amino acid cotransporter (system a neutral amino acid transporter) responsible for the sodium-dependent intake of neutral amino acids such as alanine, glycine, serine, cysteine, and proline.</text>
</comment>
<protein>
    <recommendedName>
        <fullName evidence="7">Solute carrier family 5 member 4</fullName>
    </recommendedName>
    <alternativeName>
        <fullName evidence="6">Low affinity sodium-glucose cotransporter</fullName>
    </alternativeName>
</protein>